<organism>
    <name type="scientific">Drosophila melanogaster</name>
    <name type="common">Fruit fly</name>
    <dbReference type="NCBI Taxonomy" id="7227"/>
    <lineage>
        <taxon>Eukaryota</taxon>
        <taxon>Metazoa</taxon>
        <taxon>Ecdysozoa</taxon>
        <taxon>Arthropoda</taxon>
        <taxon>Hexapoda</taxon>
        <taxon>Insecta</taxon>
        <taxon>Pterygota</taxon>
        <taxon>Neoptera</taxon>
        <taxon>Endopterygota</taxon>
        <taxon>Diptera</taxon>
        <taxon>Brachycera</taxon>
        <taxon>Muscomorpha</taxon>
        <taxon>Ephydroidea</taxon>
        <taxon>Drosophilidae</taxon>
        <taxon>Drosophila</taxon>
        <taxon>Sophophora</taxon>
    </lineage>
</organism>
<comment type="function">
    <text evidence="1">May catalyze the initial reaction in O-linked oligosaccharide biosynthesis, the transfer of an N-acetyl-D-galactosamine residue to a serine or threonine residue on the protein receptor.</text>
</comment>
<comment type="catalytic activity">
    <reaction>
        <text>L-seryl-[protein] + UDP-N-acetyl-alpha-D-galactosamine = a 3-O-[N-acetyl-alpha-D-galactosaminyl]-L-seryl-[protein] + UDP + H(+)</text>
        <dbReference type="Rhea" id="RHEA:23956"/>
        <dbReference type="Rhea" id="RHEA-COMP:9863"/>
        <dbReference type="Rhea" id="RHEA-COMP:12788"/>
        <dbReference type="ChEBI" id="CHEBI:15378"/>
        <dbReference type="ChEBI" id="CHEBI:29999"/>
        <dbReference type="ChEBI" id="CHEBI:53604"/>
        <dbReference type="ChEBI" id="CHEBI:58223"/>
        <dbReference type="ChEBI" id="CHEBI:67138"/>
        <dbReference type="EC" id="2.4.1.41"/>
    </reaction>
</comment>
<comment type="catalytic activity">
    <reaction>
        <text>L-threonyl-[protein] + UDP-N-acetyl-alpha-D-galactosamine = a 3-O-[N-acetyl-alpha-D-galactosaminyl]-L-threonyl-[protein] + UDP + H(+)</text>
        <dbReference type="Rhea" id="RHEA:52424"/>
        <dbReference type="Rhea" id="RHEA-COMP:11060"/>
        <dbReference type="Rhea" id="RHEA-COMP:11689"/>
        <dbReference type="ChEBI" id="CHEBI:15378"/>
        <dbReference type="ChEBI" id="CHEBI:30013"/>
        <dbReference type="ChEBI" id="CHEBI:58223"/>
        <dbReference type="ChEBI" id="CHEBI:67138"/>
        <dbReference type="ChEBI" id="CHEBI:87075"/>
        <dbReference type="EC" id="2.4.1.41"/>
    </reaction>
</comment>
<comment type="cofactor">
    <cofactor evidence="1">
        <name>Mn(2+)</name>
        <dbReference type="ChEBI" id="CHEBI:29035"/>
    </cofactor>
</comment>
<comment type="pathway">
    <text>Protein modification; protein glycosylation.</text>
</comment>
<comment type="subcellular location">
    <subcellularLocation>
        <location evidence="1">Golgi apparatus membrane</location>
        <topology evidence="1">Single-pass type II membrane protein</topology>
    </subcellularLocation>
</comment>
<comment type="tissue specificity">
    <text>During embryonic stages 16-17, very weak expression in the midgut.</text>
</comment>
<comment type="developmental stage">
    <text>Transcripts first detected during embryonic stages 16-17.</text>
</comment>
<comment type="domain">
    <text evidence="1">There are two conserved domains in the glycosyltransferase region: the N-terminal domain (domain A, also called GT1 motif), which is probably involved in manganese coordination and substrate binding and the C-terminal domain (domain B, also called Gal/GalNAc-T motif), which is probably involved in catalytic reaction and UDP-Gal binding.</text>
</comment>
<comment type="domain">
    <text evidence="1">The ricin B-type lectin domain binds to GalNAc and contributes to the glycopeptide specificity.</text>
</comment>
<comment type="similarity">
    <text evidence="4">Belongs to the glycosyltransferase 2 family. GalNAc-T subfamily.</text>
</comment>
<accession>Q8MYY6</accession>
<accession>Q9VAT9</accession>
<evidence type="ECO:0000250" key="1"/>
<evidence type="ECO:0000255" key="2"/>
<evidence type="ECO:0000255" key="3">
    <source>
        <dbReference type="PROSITE-ProRule" id="PRU00174"/>
    </source>
</evidence>
<evidence type="ECO:0000305" key="4"/>
<proteinExistence type="evidence at transcript level"/>
<gene>
    <name type="primary">pgant13</name>
    <name type="ORF">CG10000</name>
</gene>
<keyword id="KW-1015">Disulfide bond</keyword>
<keyword id="KW-0325">Glycoprotein</keyword>
<keyword id="KW-0328">Glycosyltransferase</keyword>
<keyword id="KW-0333">Golgi apparatus</keyword>
<keyword id="KW-0430">Lectin</keyword>
<keyword id="KW-0464">Manganese</keyword>
<keyword id="KW-0472">Membrane</keyword>
<keyword id="KW-0479">Metal-binding</keyword>
<keyword id="KW-1185">Reference proteome</keyword>
<keyword id="KW-0735">Signal-anchor</keyword>
<keyword id="KW-0808">Transferase</keyword>
<keyword id="KW-0812">Transmembrane</keyword>
<keyword id="KW-1133">Transmembrane helix</keyword>
<dbReference type="EC" id="2.4.1.41"/>
<dbReference type="EMBL" id="AE014297">
    <property type="protein sequence ID" value="AAF56810.2"/>
    <property type="molecule type" value="Genomic_DNA"/>
</dbReference>
<dbReference type="EMBL" id="AY113484">
    <property type="protein sequence ID" value="AAM29489.1"/>
    <property type="molecule type" value="mRNA"/>
</dbReference>
<dbReference type="RefSeq" id="NP_651630.3">
    <property type="nucleotide sequence ID" value="NM_143373.3"/>
</dbReference>
<dbReference type="SMR" id="Q8MYY6"/>
<dbReference type="FunCoup" id="Q8MYY6">
    <property type="interactions" value="37"/>
</dbReference>
<dbReference type="STRING" id="7227.FBpp0084684"/>
<dbReference type="CAZy" id="CBM13">
    <property type="family name" value="Carbohydrate-Binding Module Family 13"/>
</dbReference>
<dbReference type="CAZy" id="GT27">
    <property type="family name" value="Glycosyltransferase Family 27"/>
</dbReference>
<dbReference type="GlyCosmos" id="Q8MYY6">
    <property type="glycosylation" value="3 sites, No reported glycans"/>
</dbReference>
<dbReference type="GlyGen" id="Q8MYY6">
    <property type="glycosylation" value="3 sites"/>
</dbReference>
<dbReference type="PaxDb" id="7227-FBpp0084684"/>
<dbReference type="EnsemblMetazoa" id="FBtr0085315">
    <property type="protein sequence ID" value="FBpp0084684"/>
    <property type="gene ID" value="FBgn0039596"/>
</dbReference>
<dbReference type="GeneID" id="43394"/>
<dbReference type="KEGG" id="dme:Dmel_CG10000"/>
<dbReference type="UCSC" id="CG10000-RA">
    <property type="organism name" value="d. melanogaster"/>
</dbReference>
<dbReference type="AGR" id="FB:FBgn0039596"/>
<dbReference type="FlyBase" id="FBgn0039596">
    <property type="gene designation" value="CG10000"/>
</dbReference>
<dbReference type="VEuPathDB" id="VectorBase:FBgn0039596"/>
<dbReference type="eggNOG" id="KOG3738">
    <property type="taxonomic scope" value="Eukaryota"/>
</dbReference>
<dbReference type="HOGENOM" id="CLU_013477_0_2_1"/>
<dbReference type="InParanoid" id="Q8MYY6"/>
<dbReference type="OMA" id="LMMSREW"/>
<dbReference type="OrthoDB" id="429263at2759"/>
<dbReference type="PhylomeDB" id="Q8MYY6"/>
<dbReference type="Reactome" id="R-DME-913709">
    <property type="pathway name" value="O-linked glycosylation of mucins"/>
</dbReference>
<dbReference type="UniPathway" id="UPA00378"/>
<dbReference type="BioGRID-ORCS" id="43394">
    <property type="hits" value="0 hits in 3 CRISPR screens"/>
</dbReference>
<dbReference type="GenomeRNAi" id="43394"/>
<dbReference type="PRO" id="PR:Q8MYY6"/>
<dbReference type="Proteomes" id="UP000000803">
    <property type="component" value="Chromosome 3R"/>
</dbReference>
<dbReference type="Bgee" id="FBgn0039596">
    <property type="expression patterns" value="Expressed in adult differentiating enterocyte in digestive tract and 10 other cell types or tissues"/>
</dbReference>
<dbReference type="ExpressionAtlas" id="Q8MYY6">
    <property type="expression patterns" value="baseline and differential"/>
</dbReference>
<dbReference type="GO" id="GO:0005794">
    <property type="term" value="C:Golgi apparatus"/>
    <property type="evidence" value="ECO:0000318"/>
    <property type="project" value="GO_Central"/>
</dbReference>
<dbReference type="GO" id="GO:0000139">
    <property type="term" value="C:Golgi membrane"/>
    <property type="evidence" value="ECO:0007669"/>
    <property type="project" value="UniProtKB-SubCell"/>
</dbReference>
<dbReference type="GO" id="GO:0030246">
    <property type="term" value="F:carbohydrate binding"/>
    <property type="evidence" value="ECO:0007669"/>
    <property type="project" value="UniProtKB-KW"/>
</dbReference>
<dbReference type="GO" id="GO:0046872">
    <property type="term" value="F:metal ion binding"/>
    <property type="evidence" value="ECO:0007669"/>
    <property type="project" value="UniProtKB-KW"/>
</dbReference>
<dbReference type="GO" id="GO:0004653">
    <property type="term" value="F:polypeptide N-acetylgalactosaminyltransferase activity"/>
    <property type="evidence" value="ECO:0000250"/>
    <property type="project" value="UniProtKB"/>
</dbReference>
<dbReference type="GO" id="GO:0006493">
    <property type="term" value="P:protein O-linked glycosylation"/>
    <property type="evidence" value="ECO:0000250"/>
    <property type="project" value="UniProtKB"/>
</dbReference>
<dbReference type="GO" id="GO:0019953">
    <property type="term" value="P:sexual reproduction"/>
    <property type="evidence" value="ECO:0000270"/>
    <property type="project" value="FlyBase"/>
</dbReference>
<dbReference type="CDD" id="cd02510">
    <property type="entry name" value="pp-GalNAc-T"/>
    <property type="match status" value="1"/>
</dbReference>
<dbReference type="Gene3D" id="2.80.10.50">
    <property type="match status" value="1"/>
</dbReference>
<dbReference type="Gene3D" id="3.90.550.10">
    <property type="entry name" value="Spore Coat Polysaccharide Biosynthesis Protein SpsA, Chain A"/>
    <property type="match status" value="1"/>
</dbReference>
<dbReference type="InterPro" id="IPR045885">
    <property type="entry name" value="GalNAc-T"/>
</dbReference>
<dbReference type="InterPro" id="IPR001173">
    <property type="entry name" value="Glyco_trans_2-like"/>
</dbReference>
<dbReference type="InterPro" id="IPR029044">
    <property type="entry name" value="Nucleotide-diphossugar_trans"/>
</dbReference>
<dbReference type="InterPro" id="IPR035992">
    <property type="entry name" value="Ricin_B-like_lectins"/>
</dbReference>
<dbReference type="InterPro" id="IPR000772">
    <property type="entry name" value="Ricin_B_lectin"/>
</dbReference>
<dbReference type="PANTHER" id="PTHR11675">
    <property type="entry name" value="N-ACETYLGALACTOSAMINYLTRANSFERASE"/>
    <property type="match status" value="1"/>
</dbReference>
<dbReference type="PANTHER" id="PTHR11675:SF128">
    <property type="entry name" value="POLYPEPTIDE N-ACETYLGALACTOSAMINYLTRANSFERASE 13-RELATED"/>
    <property type="match status" value="1"/>
</dbReference>
<dbReference type="Pfam" id="PF00535">
    <property type="entry name" value="Glycos_transf_2"/>
    <property type="match status" value="1"/>
</dbReference>
<dbReference type="Pfam" id="PF00652">
    <property type="entry name" value="Ricin_B_lectin"/>
    <property type="match status" value="1"/>
</dbReference>
<dbReference type="SUPFAM" id="SSF53448">
    <property type="entry name" value="Nucleotide-diphospho-sugar transferases"/>
    <property type="match status" value="1"/>
</dbReference>
<dbReference type="SUPFAM" id="SSF50370">
    <property type="entry name" value="Ricin B-like lectins"/>
    <property type="match status" value="1"/>
</dbReference>
<dbReference type="PROSITE" id="PS50231">
    <property type="entry name" value="RICIN_B_LECTIN"/>
    <property type="match status" value="1"/>
</dbReference>
<protein>
    <recommendedName>
        <fullName>Putative polypeptide N-acetylgalactosaminyltransferase 13</fullName>
        <shortName>pp-GaNTase 13</shortName>
        <ecNumber>2.4.1.41</ecNumber>
    </recommendedName>
    <alternativeName>
        <fullName>Protein-UDP acetylgalactosaminyltransferase 13</fullName>
    </alternativeName>
    <alternativeName>
        <fullName>UDP-GalNAc:polypeptide N-acetylgalactosaminyltransferase 13</fullName>
    </alternativeName>
</protein>
<reference key="1">
    <citation type="journal article" date="2000" name="Science">
        <title>The genome sequence of Drosophila melanogaster.</title>
        <authorList>
            <person name="Adams M.D."/>
            <person name="Celniker S.E."/>
            <person name="Holt R.A."/>
            <person name="Evans C.A."/>
            <person name="Gocayne J.D."/>
            <person name="Amanatides P.G."/>
            <person name="Scherer S.E."/>
            <person name="Li P.W."/>
            <person name="Hoskins R.A."/>
            <person name="Galle R.F."/>
            <person name="George R.A."/>
            <person name="Lewis S.E."/>
            <person name="Richards S."/>
            <person name="Ashburner M."/>
            <person name="Henderson S.N."/>
            <person name="Sutton G.G."/>
            <person name="Wortman J.R."/>
            <person name="Yandell M.D."/>
            <person name="Zhang Q."/>
            <person name="Chen L.X."/>
            <person name="Brandon R.C."/>
            <person name="Rogers Y.-H.C."/>
            <person name="Blazej R.G."/>
            <person name="Champe M."/>
            <person name="Pfeiffer B.D."/>
            <person name="Wan K.H."/>
            <person name="Doyle C."/>
            <person name="Baxter E.G."/>
            <person name="Helt G."/>
            <person name="Nelson C.R."/>
            <person name="Miklos G.L.G."/>
            <person name="Abril J.F."/>
            <person name="Agbayani A."/>
            <person name="An H.-J."/>
            <person name="Andrews-Pfannkoch C."/>
            <person name="Baldwin D."/>
            <person name="Ballew R.M."/>
            <person name="Basu A."/>
            <person name="Baxendale J."/>
            <person name="Bayraktaroglu L."/>
            <person name="Beasley E.M."/>
            <person name="Beeson K.Y."/>
            <person name="Benos P.V."/>
            <person name="Berman B.P."/>
            <person name="Bhandari D."/>
            <person name="Bolshakov S."/>
            <person name="Borkova D."/>
            <person name="Botchan M.R."/>
            <person name="Bouck J."/>
            <person name="Brokstein P."/>
            <person name="Brottier P."/>
            <person name="Burtis K.C."/>
            <person name="Busam D.A."/>
            <person name="Butler H."/>
            <person name="Cadieu E."/>
            <person name="Center A."/>
            <person name="Chandra I."/>
            <person name="Cherry J.M."/>
            <person name="Cawley S."/>
            <person name="Dahlke C."/>
            <person name="Davenport L.B."/>
            <person name="Davies P."/>
            <person name="de Pablos B."/>
            <person name="Delcher A."/>
            <person name="Deng Z."/>
            <person name="Mays A.D."/>
            <person name="Dew I."/>
            <person name="Dietz S.M."/>
            <person name="Dodson K."/>
            <person name="Doup L.E."/>
            <person name="Downes M."/>
            <person name="Dugan-Rocha S."/>
            <person name="Dunkov B.C."/>
            <person name="Dunn P."/>
            <person name="Durbin K.J."/>
            <person name="Evangelista C.C."/>
            <person name="Ferraz C."/>
            <person name="Ferriera S."/>
            <person name="Fleischmann W."/>
            <person name="Fosler C."/>
            <person name="Gabrielian A.E."/>
            <person name="Garg N.S."/>
            <person name="Gelbart W.M."/>
            <person name="Glasser K."/>
            <person name="Glodek A."/>
            <person name="Gong F."/>
            <person name="Gorrell J.H."/>
            <person name="Gu Z."/>
            <person name="Guan P."/>
            <person name="Harris M."/>
            <person name="Harris N.L."/>
            <person name="Harvey D.A."/>
            <person name="Heiman T.J."/>
            <person name="Hernandez J.R."/>
            <person name="Houck J."/>
            <person name="Hostin D."/>
            <person name="Houston K.A."/>
            <person name="Howland T.J."/>
            <person name="Wei M.-H."/>
            <person name="Ibegwam C."/>
            <person name="Jalali M."/>
            <person name="Kalush F."/>
            <person name="Karpen G.H."/>
            <person name="Ke Z."/>
            <person name="Kennison J.A."/>
            <person name="Ketchum K.A."/>
            <person name="Kimmel B.E."/>
            <person name="Kodira C.D."/>
            <person name="Kraft C.L."/>
            <person name="Kravitz S."/>
            <person name="Kulp D."/>
            <person name="Lai Z."/>
            <person name="Lasko P."/>
            <person name="Lei Y."/>
            <person name="Levitsky A.A."/>
            <person name="Li J.H."/>
            <person name="Li Z."/>
            <person name="Liang Y."/>
            <person name="Lin X."/>
            <person name="Liu X."/>
            <person name="Mattei B."/>
            <person name="McIntosh T.C."/>
            <person name="McLeod M.P."/>
            <person name="McPherson D."/>
            <person name="Merkulov G."/>
            <person name="Milshina N.V."/>
            <person name="Mobarry C."/>
            <person name="Morris J."/>
            <person name="Moshrefi A."/>
            <person name="Mount S.M."/>
            <person name="Moy M."/>
            <person name="Murphy B."/>
            <person name="Murphy L."/>
            <person name="Muzny D.M."/>
            <person name="Nelson D.L."/>
            <person name="Nelson D.R."/>
            <person name="Nelson K.A."/>
            <person name="Nixon K."/>
            <person name="Nusskern D.R."/>
            <person name="Pacleb J.M."/>
            <person name="Palazzolo M."/>
            <person name="Pittman G.S."/>
            <person name="Pan S."/>
            <person name="Pollard J."/>
            <person name="Puri V."/>
            <person name="Reese M.G."/>
            <person name="Reinert K."/>
            <person name="Remington K."/>
            <person name="Saunders R.D.C."/>
            <person name="Scheeler F."/>
            <person name="Shen H."/>
            <person name="Shue B.C."/>
            <person name="Siden-Kiamos I."/>
            <person name="Simpson M."/>
            <person name="Skupski M.P."/>
            <person name="Smith T.J."/>
            <person name="Spier E."/>
            <person name="Spradling A.C."/>
            <person name="Stapleton M."/>
            <person name="Strong R."/>
            <person name="Sun E."/>
            <person name="Svirskas R."/>
            <person name="Tector C."/>
            <person name="Turner R."/>
            <person name="Venter E."/>
            <person name="Wang A.H."/>
            <person name="Wang X."/>
            <person name="Wang Z.-Y."/>
            <person name="Wassarman D.A."/>
            <person name="Weinstock G.M."/>
            <person name="Weissenbach J."/>
            <person name="Williams S.M."/>
            <person name="Woodage T."/>
            <person name="Worley K.C."/>
            <person name="Wu D."/>
            <person name="Yang S."/>
            <person name="Yao Q.A."/>
            <person name="Ye J."/>
            <person name="Yeh R.-F."/>
            <person name="Zaveri J.S."/>
            <person name="Zhan M."/>
            <person name="Zhang G."/>
            <person name="Zhao Q."/>
            <person name="Zheng L."/>
            <person name="Zheng X.H."/>
            <person name="Zhong F.N."/>
            <person name="Zhong W."/>
            <person name="Zhou X."/>
            <person name="Zhu S.C."/>
            <person name="Zhu X."/>
            <person name="Smith H.O."/>
            <person name="Gibbs R.A."/>
            <person name="Myers E.W."/>
            <person name="Rubin G.M."/>
            <person name="Venter J.C."/>
        </authorList>
    </citation>
    <scope>NUCLEOTIDE SEQUENCE [LARGE SCALE GENOMIC DNA]</scope>
    <source>
        <strain>Berkeley</strain>
    </source>
</reference>
<reference key="2">
    <citation type="journal article" date="2002" name="Genome Biol.">
        <title>Annotation of the Drosophila melanogaster euchromatic genome: a systematic review.</title>
        <authorList>
            <person name="Misra S."/>
            <person name="Crosby M.A."/>
            <person name="Mungall C.J."/>
            <person name="Matthews B.B."/>
            <person name="Campbell K.S."/>
            <person name="Hradecky P."/>
            <person name="Huang Y."/>
            <person name="Kaminker J.S."/>
            <person name="Millburn G.H."/>
            <person name="Prochnik S.E."/>
            <person name="Smith C.D."/>
            <person name="Tupy J.L."/>
            <person name="Whitfield E.J."/>
            <person name="Bayraktaroglu L."/>
            <person name="Berman B.P."/>
            <person name="Bettencourt B.R."/>
            <person name="Celniker S.E."/>
            <person name="de Grey A.D.N.J."/>
            <person name="Drysdale R.A."/>
            <person name="Harris N.L."/>
            <person name="Richter J."/>
            <person name="Russo S."/>
            <person name="Schroeder A.J."/>
            <person name="Shu S.Q."/>
            <person name="Stapleton M."/>
            <person name="Yamada C."/>
            <person name="Ashburner M."/>
            <person name="Gelbart W.M."/>
            <person name="Rubin G.M."/>
            <person name="Lewis S.E."/>
        </authorList>
    </citation>
    <scope>GENOME REANNOTATION</scope>
    <source>
        <strain>Berkeley</strain>
    </source>
</reference>
<reference key="3">
    <citation type="journal article" date="2002" name="Genome Biol.">
        <title>A Drosophila full-length cDNA resource.</title>
        <authorList>
            <person name="Stapleton M."/>
            <person name="Carlson J.W."/>
            <person name="Brokstein P."/>
            <person name="Yu C."/>
            <person name="Champe M."/>
            <person name="George R.A."/>
            <person name="Guarin H."/>
            <person name="Kronmiller B."/>
            <person name="Pacleb J.M."/>
            <person name="Park S."/>
            <person name="Wan K.H."/>
            <person name="Rubin G.M."/>
            <person name="Celniker S.E."/>
        </authorList>
    </citation>
    <scope>NUCLEOTIDE SEQUENCE [LARGE SCALE MRNA]</scope>
    <source>
        <strain>Berkeley</strain>
        <tissue>Head</tissue>
    </source>
</reference>
<sequence>MHAGGKYCGPRHCSFYIIAFLICQLFFLVIFIRNDDASSANELLSFMNESEESDHLDWRVFISHTPETSEDFYQYNIHLSNALGLIRKLPVTRHHSCTTRNSILPAPLEANVSVVISFHNEARSMLLRTIVSLLSRSPEDYLHELILVDDGSQRDVTLLDDLKRWMGGVFGSRYRLGLTFLRNQERMGLIWSRNRGASLASGRYVLFLDSHCEVNEGWLEPLLERLALNTNLAVSPLLDPIDPTTLSYRKGNELLKGGFDWSLHFHWLKRQLTNQESLEMPYQSPAFAGGVLMMSREWFLKLGSFNPYLKIWGGESIELAIKLWLCGGQIEIVPCSRIGHIFRRRHAFDFPPQSDRQLSPAQETYLHNSKIIAESWLDEYKNMFYALRPAARRIPLDHTYDELQRMRKERRCHPFEWYLRHVSPELRMHFDELSATGTLRNEDRCVHARQKDSQPILASCYLSDITQWSMLRQSGQLSTHRELCLAVGFGMRIALEPCGRNETVRRSQRWVRLGTHLLHAESHLCLDNPLKDRLEMSTCRSHAVSQSFQFALEMEGQT</sequence>
<feature type="chain" id="PRO_0000059167" description="Putative polypeptide N-acetylgalactosaminyltransferase 13">
    <location>
        <begin position="1"/>
        <end position="558"/>
    </location>
</feature>
<feature type="topological domain" description="Cytoplasmic" evidence="2">
    <location>
        <begin position="1"/>
        <end position="12"/>
    </location>
</feature>
<feature type="transmembrane region" description="Helical; Signal-anchor for type II membrane protein" evidence="2">
    <location>
        <begin position="13"/>
        <end position="32"/>
    </location>
</feature>
<feature type="topological domain" description="Lumenal" evidence="2">
    <location>
        <begin position="33"/>
        <end position="558"/>
    </location>
</feature>
<feature type="domain" description="Ricin B-type lectin" evidence="3">
    <location>
        <begin position="422"/>
        <end position="556"/>
    </location>
</feature>
<feature type="region of interest" description="Catalytic subdomain A">
    <location>
        <begin position="109"/>
        <end position="225"/>
    </location>
</feature>
<feature type="region of interest" description="Catalytic subdomain B">
    <location>
        <begin position="281"/>
        <end position="343"/>
    </location>
</feature>
<feature type="binding site" evidence="1">
    <location>
        <position position="150"/>
    </location>
    <ligand>
        <name>substrate</name>
    </ligand>
</feature>
<feature type="binding site" evidence="1">
    <location>
        <position position="186"/>
    </location>
    <ligand>
        <name>substrate</name>
    </ligand>
</feature>
<feature type="binding site" evidence="1">
    <location>
        <position position="209"/>
    </location>
    <ligand>
        <name>Mn(2+)</name>
        <dbReference type="ChEBI" id="CHEBI:29035"/>
    </ligand>
</feature>
<feature type="binding site" evidence="1">
    <location>
        <position position="210"/>
    </location>
    <ligand>
        <name>substrate</name>
    </ligand>
</feature>
<feature type="binding site" evidence="1">
    <location>
        <position position="211"/>
    </location>
    <ligand>
        <name>Mn(2+)</name>
        <dbReference type="ChEBI" id="CHEBI:29035"/>
    </ligand>
</feature>
<feature type="binding site" evidence="1">
    <location>
        <position position="312"/>
    </location>
    <ligand>
        <name>substrate</name>
    </ligand>
</feature>
<feature type="binding site" evidence="1">
    <location>
        <position position="340"/>
    </location>
    <ligand>
        <name>Mn(2+)</name>
        <dbReference type="ChEBI" id="CHEBI:29035"/>
    </ligand>
</feature>
<feature type="binding site" evidence="1">
    <location>
        <position position="343"/>
    </location>
    <ligand>
        <name>substrate</name>
    </ligand>
</feature>
<feature type="binding site" evidence="1">
    <location>
        <position position="346"/>
    </location>
    <ligand>
        <name>substrate</name>
    </ligand>
</feature>
<feature type="glycosylation site" description="N-linked (GlcNAc...) asparagine" evidence="2">
    <location>
        <position position="48"/>
    </location>
</feature>
<feature type="glycosylation site" description="N-linked (GlcNAc...) asparagine" evidence="2">
    <location>
        <position position="111"/>
    </location>
</feature>
<feature type="glycosylation site" description="N-linked (GlcNAc...) asparagine" evidence="2">
    <location>
        <position position="501"/>
    </location>
</feature>
<feature type="disulfide bond" evidence="3">
    <location>
        <begin position="97"/>
        <end position="335"/>
    </location>
</feature>
<feature type="disulfide bond" evidence="3">
    <location>
        <begin position="326"/>
        <end position="412"/>
    </location>
</feature>
<feature type="disulfide bond" evidence="3">
    <location>
        <begin position="445"/>
        <end position="460"/>
    </location>
</feature>
<feature type="disulfide bond" evidence="3">
    <location>
        <begin position="484"/>
        <end position="498"/>
    </location>
</feature>
<feature type="disulfide bond" evidence="3">
    <location>
        <begin position="525"/>
        <end position="539"/>
    </location>
</feature>
<feature type="sequence conflict" description="In Ref. 3; AAM29489." evidence="4" ref="3">
    <original>G</original>
    <variation>E</variation>
    <location>
        <position position="171"/>
    </location>
</feature>
<name>GLT13_DROME</name>